<protein>
    <recommendedName>
        <fullName evidence="1">UDP-N-acetylmuramate--L-alanine ligase</fullName>
        <ecNumber evidence="1">6.3.2.8</ecNumber>
    </recommendedName>
    <alternativeName>
        <fullName evidence="1">UDP-N-acetylmuramoyl-L-alanine synthetase</fullName>
    </alternativeName>
</protein>
<reference key="1">
    <citation type="submission" date="2008-02" db="EMBL/GenBank/DDBJ databases">
        <title>Complete sequence of chromosome 1 of Burkholderia cenocepacia MC0-3.</title>
        <authorList>
            <person name="Copeland A."/>
            <person name="Lucas S."/>
            <person name="Lapidus A."/>
            <person name="Barry K."/>
            <person name="Bruce D."/>
            <person name="Goodwin L."/>
            <person name="Glavina del Rio T."/>
            <person name="Dalin E."/>
            <person name="Tice H."/>
            <person name="Pitluck S."/>
            <person name="Chain P."/>
            <person name="Malfatti S."/>
            <person name="Shin M."/>
            <person name="Vergez L."/>
            <person name="Schmutz J."/>
            <person name="Larimer F."/>
            <person name="Land M."/>
            <person name="Hauser L."/>
            <person name="Kyrpides N."/>
            <person name="Mikhailova N."/>
            <person name="Tiedje J."/>
            <person name="Richardson P."/>
        </authorList>
    </citation>
    <scope>NUCLEOTIDE SEQUENCE [LARGE SCALE GENOMIC DNA]</scope>
    <source>
        <strain>MC0-3</strain>
    </source>
</reference>
<keyword id="KW-0067">ATP-binding</keyword>
<keyword id="KW-0131">Cell cycle</keyword>
<keyword id="KW-0132">Cell division</keyword>
<keyword id="KW-0133">Cell shape</keyword>
<keyword id="KW-0961">Cell wall biogenesis/degradation</keyword>
<keyword id="KW-0963">Cytoplasm</keyword>
<keyword id="KW-0436">Ligase</keyword>
<keyword id="KW-0547">Nucleotide-binding</keyword>
<keyword id="KW-0573">Peptidoglycan synthesis</keyword>
<evidence type="ECO:0000255" key="1">
    <source>
        <dbReference type="HAMAP-Rule" id="MF_00046"/>
    </source>
</evidence>
<sequence length="465" mass="48989">MKHIVKHIHFVGIGGAGMSGIAEVLVNLGYAVSGSDLSRNAVTDRLEALGARIAIGHDAANIEGANAVVVSTAVRSDNPEVLAARHQGVPIVQRAVMLAELMRLKQGIAIAGTHGKTTTTSLVASVLAAGGLDPTFVIGGRLISAGANARLGTGDFIVAEADESDASFLNLYPVIEVITNIDADHMDTYGHDFARLKQAFIEFTQRLPFYGSAVVCVDDPNVRQIIPFISKPVVRYGLSPDAQVRAEDIDARDGRMHFTVIREGRAPLAVVLNMPGLHNVQNALAAIAIATDLGVSDDAIQLALAEFNGVGRRFQRYGDVPSADGGQYTLIDDYGHHPVEMAATIAAARGAFPGRRLVLAFQPHRYTRTRDCFDDFVNVLSTVDALVLTEVYAAGEAAIPTASGDALSRALRAVGKVDPVFVATVDDVPDALAKVAQNGDVVITMGAGSIGGVPAKLVQHIQQKA</sequence>
<dbReference type="EC" id="6.3.2.8" evidence="1"/>
<dbReference type="EMBL" id="CP000958">
    <property type="protein sequence ID" value="ACA89709.1"/>
    <property type="molecule type" value="Genomic_DNA"/>
</dbReference>
<dbReference type="RefSeq" id="WP_012327853.1">
    <property type="nucleotide sequence ID" value="NC_010508.1"/>
</dbReference>
<dbReference type="SMR" id="B1JV79"/>
<dbReference type="GeneID" id="83047332"/>
<dbReference type="KEGG" id="bcm:Bcenmc03_0531"/>
<dbReference type="HOGENOM" id="CLU_028104_2_2_4"/>
<dbReference type="UniPathway" id="UPA00219"/>
<dbReference type="Proteomes" id="UP000002169">
    <property type="component" value="Chromosome 1"/>
</dbReference>
<dbReference type="GO" id="GO:0005737">
    <property type="term" value="C:cytoplasm"/>
    <property type="evidence" value="ECO:0007669"/>
    <property type="project" value="UniProtKB-SubCell"/>
</dbReference>
<dbReference type="GO" id="GO:0005524">
    <property type="term" value="F:ATP binding"/>
    <property type="evidence" value="ECO:0007669"/>
    <property type="project" value="UniProtKB-UniRule"/>
</dbReference>
<dbReference type="GO" id="GO:0008763">
    <property type="term" value="F:UDP-N-acetylmuramate-L-alanine ligase activity"/>
    <property type="evidence" value="ECO:0007669"/>
    <property type="project" value="UniProtKB-UniRule"/>
</dbReference>
<dbReference type="GO" id="GO:0051301">
    <property type="term" value="P:cell division"/>
    <property type="evidence" value="ECO:0007669"/>
    <property type="project" value="UniProtKB-KW"/>
</dbReference>
<dbReference type="GO" id="GO:0071555">
    <property type="term" value="P:cell wall organization"/>
    <property type="evidence" value="ECO:0007669"/>
    <property type="project" value="UniProtKB-KW"/>
</dbReference>
<dbReference type="GO" id="GO:0009252">
    <property type="term" value="P:peptidoglycan biosynthetic process"/>
    <property type="evidence" value="ECO:0007669"/>
    <property type="project" value="UniProtKB-UniRule"/>
</dbReference>
<dbReference type="GO" id="GO:0008360">
    <property type="term" value="P:regulation of cell shape"/>
    <property type="evidence" value="ECO:0007669"/>
    <property type="project" value="UniProtKB-KW"/>
</dbReference>
<dbReference type="FunFam" id="3.40.1190.10:FF:000001">
    <property type="entry name" value="UDP-N-acetylmuramate--L-alanine ligase"/>
    <property type="match status" value="1"/>
</dbReference>
<dbReference type="Gene3D" id="3.90.190.20">
    <property type="entry name" value="Mur ligase, C-terminal domain"/>
    <property type="match status" value="1"/>
</dbReference>
<dbReference type="Gene3D" id="3.40.1190.10">
    <property type="entry name" value="Mur-like, catalytic domain"/>
    <property type="match status" value="1"/>
</dbReference>
<dbReference type="Gene3D" id="3.40.50.720">
    <property type="entry name" value="NAD(P)-binding Rossmann-like Domain"/>
    <property type="match status" value="1"/>
</dbReference>
<dbReference type="HAMAP" id="MF_00046">
    <property type="entry name" value="MurC"/>
    <property type="match status" value="1"/>
</dbReference>
<dbReference type="InterPro" id="IPR036565">
    <property type="entry name" value="Mur-like_cat_sf"/>
</dbReference>
<dbReference type="InterPro" id="IPR004101">
    <property type="entry name" value="Mur_ligase_C"/>
</dbReference>
<dbReference type="InterPro" id="IPR036615">
    <property type="entry name" value="Mur_ligase_C_dom_sf"/>
</dbReference>
<dbReference type="InterPro" id="IPR013221">
    <property type="entry name" value="Mur_ligase_cen"/>
</dbReference>
<dbReference type="InterPro" id="IPR000713">
    <property type="entry name" value="Mur_ligase_N"/>
</dbReference>
<dbReference type="InterPro" id="IPR050061">
    <property type="entry name" value="MurCDEF_pg_biosynth"/>
</dbReference>
<dbReference type="InterPro" id="IPR005758">
    <property type="entry name" value="UDP-N-AcMur_Ala_ligase_MurC"/>
</dbReference>
<dbReference type="NCBIfam" id="TIGR01082">
    <property type="entry name" value="murC"/>
    <property type="match status" value="1"/>
</dbReference>
<dbReference type="PANTHER" id="PTHR43445:SF3">
    <property type="entry name" value="UDP-N-ACETYLMURAMATE--L-ALANINE LIGASE"/>
    <property type="match status" value="1"/>
</dbReference>
<dbReference type="PANTHER" id="PTHR43445">
    <property type="entry name" value="UDP-N-ACETYLMURAMATE--L-ALANINE LIGASE-RELATED"/>
    <property type="match status" value="1"/>
</dbReference>
<dbReference type="Pfam" id="PF01225">
    <property type="entry name" value="Mur_ligase"/>
    <property type="match status" value="1"/>
</dbReference>
<dbReference type="Pfam" id="PF02875">
    <property type="entry name" value="Mur_ligase_C"/>
    <property type="match status" value="1"/>
</dbReference>
<dbReference type="Pfam" id="PF08245">
    <property type="entry name" value="Mur_ligase_M"/>
    <property type="match status" value="1"/>
</dbReference>
<dbReference type="SUPFAM" id="SSF51984">
    <property type="entry name" value="MurCD N-terminal domain"/>
    <property type="match status" value="1"/>
</dbReference>
<dbReference type="SUPFAM" id="SSF53623">
    <property type="entry name" value="MurD-like peptide ligases, catalytic domain"/>
    <property type="match status" value="1"/>
</dbReference>
<dbReference type="SUPFAM" id="SSF53244">
    <property type="entry name" value="MurD-like peptide ligases, peptide-binding domain"/>
    <property type="match status" value="1"/>
</dbReference>
<feature type="chain" id="PRO_1000091082" description="UDP-N-acetylmuramate--L-alanine ligase">
    <location>
        <begin position="1"/>
        <end position="465"/>
    </location>
</feature>
<feature type="binding site" evidence="1">
    <location>
        <begin position="112"/>
        <end position="118"/>
    </location>
    <ligand>
        <name>ATP</name>
        <dbReference type="ChEBI" id="CHEBI:30616"/>
    </ligand>
</feature>
<accession>B1JV79</accession>
<name>MURC_BURO0</name>
<gene>
    <name evidence="1" type="primary">murC</name>
    <name type="ordered locus">Bcenmc03_0531</name>
</gene>
<proteinExistence type="inferred from homology"/>
<organism>
    <name type="scientific">Burkholderia orbicola (strain MC0-3)</name>
    <dbReference type="NCBI Taxonomy" id="406425"/>
    <lineage>
        <taxon>Bacteria</taxon>
        <taxon>Pseudomonadati</taxon>
        <taxon>Pseudomonadota</taxon>
        <taxon>Betaproteobacteria</taxon>
        <taxon>Burkholderiales</taxon>
        <taxon>Burkholderiaceae</taxon>
        <taxon>Burkholderia</taxon>
        <taxon>Burkholderia cepacia complex</taxon>
        <taxon>Burkholderia orbicola</taxon>
    </lineage>
</organism>
<comment type="function">
    <text evidence="1">Cell wall formation.</text>
</comment>
<comment type="catalytic activity">
    <reaction evidence="1">
        <text>UDP-N-acetyl-alpha-D-muramate + L-alanine + ATP = UDP-N-acetyl-alpha-D-muramoyl-L-alanine + ADP + phosphate + H(+)</text>
        <dbReference type="Rhea" id="RHEA:23372"/>
        <dbReference type="ChEBI" id="CHEBI:15378"/>
        <dbReference type="ChEBI" id="CHEBI:30616"/>
        <dbReference type="ChEBI" id="CHEBI:43474"/>
        <dbReference type="ChEBI" id="CHEBI:57972"/>
        <dbReference type="ChEBI" id="CHEBI:70757"/>
        <dbReference type="ChEBI" id="CHEBI:83898"/>
        <dbReference type="ChEBI" id="CHEBI:456216"/>
        <dbReference type="EC" id="6.3.2.8"/>
    </reaction>
</comment>
<comment type="pathway">
    <text evidence="1">Cell wall biogenesis; peptidoglycan biosynthesis.</text>
</comment>
<comment type="subcellular location">
    <subcellularLocation>
        <location evidence="1">Cytoplasm</location>
    </subcellularLocation>
</comment>
<comment type="similarity">
    <text evidence="1">Belongs to the MurCDEF family.</text>
</comment>